<accession>C0HK04</accession>
<evidence type="ECO:0000250" key="1">
    <source>
        <dbReference type="UniProtKB" id="P0DKS3"/>
    </source>
</evidence>
<evidence type="ECO:0000269" key="2">
    <source>
    </source>
</evidence>
<evidence type="ECO:0000303" key="3">
    <source>
    </source>
</evidence>
<evidence type="ECO:0000305" key="4"/>
<evidence type="ECO:0000305" key="5">
    <source>
    </source>
</evidence>
<dbReference type="SMR" id="C0HK04"/>
<dbReference type="GO" id="GO:0005576">
    <property type="term" value="C:extracellular region"/>
    <property type="evidence" value="ECO:0007669"/>
    <property type="project" value="UniProtKB-SubCell"/>
</dbReference>
<dbReference type="GO" id="GO:0090729">
    <property type="term" value="F:toxin activity"/>
    <property type="evidence" value="ECO:0007669"/>
    <property type="project" value="InterPro"/>
</dbReference>
<dbReference type="CDD" id="cd00206">
    <property type="entry name" value="TFP_snake_toxin"/>
    <property type="match status" value="1"/>
</dbReference>
<dbReference type="Gene3D" id="2.10.60.10">
    <property type="entry name" value="CD59"/>
    <property type="match status" value="1"/>
</dbReference>
<dbReference type="InterPro" id="IPR003571">
    <property type="entry name" value="Snake_3FTx"/>
</dbReference>
<dbReference type="InterPro" id="IPR045860">
    <property type="entry name" value="Snake_toxin-like_sf"/>
</dbReference>
<dbReference type="InterPro" id="IPR054131">
    <property type="entry name" value="Toxin_cobra-type"/>
</dbReference>
<dbReference type="Pfam" id="PF21947">
    <property type="entry name" value="Toxin_cobra-type"/>
    <property type="match status" value="1"/>
</dbReference>
<dbReference type="SUPFAM" id="SSF57302">
    <property type="entry name" value="Snake toxin-like"/>
    <property type="match status" value="1"/>
</dbReference>
<protein>
    <recommendedName>
        <fullName evidence="5">Clarkitoxin-1</fullName>
    </recommendedName>
    <alternativeName>
        <fullName evidence="3">Clarkitoxin-I</fullName>
    </alternativeName>
    <alternativeName>
        <fullName>Three-finger toxin</fullName>
        <shortName>3FTx</shortName>
    </alternativeName>
</protein>
<feature type="peptide" id="PRO_0000436847" description="Clarkitoxin-1" evidence="2">
    <location>
        <begin position="1"/>
        <end position="66"/>
    </location>
</feature>
<feature type="disulfide bond" evidence="1">
    <location>
        <begin position="3"/>
        <end position="24"/>
    </location>
</feature>
<feature type="disulfide bond" evidence="1">
    <location>
        <begin position="17"/>
        <end position="42"/>
    </location>
</feature>
<feature type="disulfide bond" evidence="1">
    <location>
        <begin position="46"/>
        <end position="59"/>
    </location>
</feature>
<feature type="disulfide bond" evidence="1">
    <location>
        <begin position="60"/>
        <end position="65"/>
    </location>
</feature>
<feature type="unsure residue" evidence="3">
    <location>
        <begin position="63"/>
        <end position="66"/>
    </location>
</feature>
<sequence>RICDDSSIPFLRTPQLCPKGQDVCYKKTPIVKKFKWLQKKGCASSCPKNGFIKIFKIECCTKDNCI</sequence>
<comment type="function">
    <text evidence="2">Not toxic to mice when injected intravenously or intraperitoneally.</text>
</comment>
<comment type="subcellular location">
    <subcellularLocation>
        <location evidence="2">Secreted</location>
    </subcellularLocation>
</comment>
<comment type="tissue specificity">
    <text evidence="5">Expressed by the venom gland.</text>
</comment>
<comment type="mass spectrometry"/>
<comment type="similarity">
    <text evidence="4">Belongs to the three-finger toxin family. Short-chain subfamily.</text>
</comment>
<keyword id="KW-0903">Direct protein sequencing</keyword>
<keyword id="KW-1015">Disulfide bond</keyword>
<keyword id="KW-0964">Secreted</keyword>
<reference evidence="4" key="1">
    <citation type="journal article" date="2016" name="Toxins">
        <title>Venom of the Coral Snake Micrurus clarki: Proteomic Profile, Toxicity, Immunological Cross-Neutralization, and Characterization of a Three-Finger Toxin.</title>
        <authorList>
            <person name="Lomonte B."/>
            <person name="Sasa M."/>
            <person name="Rey-Suarez P."/>
            <person name="Bryan W."/>
            <person name="Gutierrez J.M."/>
        </authorList>
    </citation>
    <scope>PROTEIN SEQUENCE</scope>
    <scope>FUNCTION</scope>
    <scope>SUBCELLULAR LOCATION</scope>
    <scope>MASS SPECTROMETRY</scope>
    <scope>IDENTIFICATION BY MASS SPECTROMETRY</scope>
    <source>
        <tissue evidence="3">Venom</tissue>
    </source>
</reference>
<organism evidence="3">
    <name type="scientific">Micrurus clarki</name>
    <name type="common">Clark's coral snake</name>
    <dbReference type="NCBI Taxonomy" id="1817999"/>
    <lineage>
        <taxon>Eukaryota</taxon>
        <taxon>Metazoa</taxon>
        <taxon>Chordata</taxon>
        <taxon>Craniata</taxon>
        <taxon>Vertebrata</taxon>
        <taxon>Euteleostomi</taxon>
        <taxon>Lepidosauria</taxon>
        <taxon>Squamata</taxon>
        <taxon>Bifurcata</taxon>
        <taxon>Unidentata</taxon>
        <taxon>Episquamata</taxon>
        <taxon>Toxicofera</taxon>
        <taxon>Serpentes</taxon>
        <taxon>Colubroidea</taxon>
        <taxon>Elapidae</taxon>
        <taxon>Elapinae</taxon>
        <taxon>Micrurus</taxon>
    </lineage>
</organism>
<name>3SX1_MICCK</name>
<proteinExistence type="evidence at protein level"/>